<dbReference type="EMBL" id="BC089917">
    <property type="protein sequence ID" value="AAH89917.1"/>
    <property type="molecule type" value="mRNA"/>
</dbReference>
<dbReference type="RefSeq" id="NP_001011972.1">
    <property type="nucleotide sequence ID" value="NM_001011972.1"/>
</dbReference>
<dbReference type="SMR" id="Q5FVL0"/>
<dbReference type="FunCoup" id="Q5FVL0">
    <property type="interactions" value="335"/>
</dbReference>
<dbReference type="STRING" id="10116.ENSRNOP00000009334"/>
<dbReference type="PhosphoSitePlus" id="Q5FVL0"/>
<dbReference type="PaxDb" id="10116-ENSRNOP00000009334"/>
<dbReference type="Ensembl" id="ENSRNOT00000009334.7">
    <property type="protein sequence ID" value="ENSRNOP00000009334.5"/>
    <property type="gene ID" value="ENSRNOG00000006926.7"/>
</dbReference>
<dbReference type="GeneID" id="297932"/>
<dbReference type="KEGG" id="rno:297932"/>
<dbReference type="UCSC" id="RGD:1306900">
    <property type="organism name" value="rat"/>
</dbReference>
<dbReference type="AGR" id="RGD:1306900"/>
<dbReference type="CTD" id="245972"/>
<dbReference type="RGD" id="1306900">
    <property type="gene designation" value="Atp6v0d2"/>
</dbReference>
<dbReference type="eggNOG" id="KOG2957">
    <property type="taxonomic scope" value="Eukaryota"/>
</dbReference>
<dbReference type="GeneTree" id="ENSGT00390000002200"/>
<dbReference type="HOGENOM" id="CLU_051277_0_0_1"/>
<dbReference type="InParanoid" id="Q5FVL0"/>
<dbReference type="OMA" id="ETLFPTC"/>
<dbReference type="OrthoDB" id="10250083at2759"/>
<dbReference type="PhylomeDB" id="Q5FVL0"/>
<dbReference type="TreeFam" id="TF300857"/>
<dbReference type="Reactome" id="R-RNO-1222556">
    <property type="pathway name" value="ROS and RNS production in phagocytes"/>
</dbReference>
<dbReference type="Reactome" id="R-RNO-77387">
    <property type="pathway name" value="Insulin receptor recycling"/>
</dbReference>
<dbReference type="Reactome" id="R-RNO-917977">
    <property type="pathway name" value="Transferrin endocytosis and recycling"/>
</dbReference>
<dbReference type="Reactome" id="R-RNO-9639288">
    <property type="pathway name" value="Amino acids regulate mTORC1"/>
</dbReference>
<dbReference type="Reactome" id="R-RNO-983712">
    <property type="pathway name" value="Ion channel transport"/>
</dbReference>
<dbReference type="PRO" id="PR:Q5FVL0"/>
<dbReference type="Proteomes" id="UP000002494">
    <property type="component" value="Chromosome 5"/>
</dbReference>
<dbReference type="Bgee" id="ENSRNOG00000006926">
    <property type="expression patterns" value="Expressed in kidney and 7 other cell types or tissues"/>
</dbReference>
<dbReference type="GO" id="GO:0016324">
    <property type="term" value="C:apical plasma membrane"/>
    <property type="evidence" value="ECO:0000314"/>
    <property type="project" value="UniProtKB"/>
</dbReference>
<dbReference type="GO" id="GO:0005769">
    <property type="term" value="C:early endosome"/>
    <property type="evidence" value="ECO:0000266"/>
    <property type="project" value="RGD"/>
</dbReference>
<dbReference type="GO" id="GO:0005768">
    <property type="term" value="C:endosome"/>
    <property type="evidence" value="ECO:0000314"/>
    <property type="project" value="RGD"/>
</dbReference>
<dbReference type="GO" id="GO:0016020">
    <property type="term" value="C:membrane"/>
    <property type="evidence" value="ECO:0000266"/>
    <property type="project" value="RGD"/>
</dbReference>
<dbReference type="GO" id="GO:0033181">
    <property type="term" value="C:plasma membrane proton-transporting V-type ATPase complex"/>
    <property type="evidence" value="ECO:0000318"/>
    <property type="project" value="GO_Central"/>
</dbReference>
<dbReference type="GO" id="GO:0033179">
    <property type="term" value="C:proton-transporting V-type ATPase, V0 domain"/>
    <property type="evidence" value="ECO:0007669"/>
    <property type="project" value="InterPro"/>
</dbReference>
<dbReference type="GO" id="GO:0016471">
    <property type="term" value="C:vacuolar proton-transporting V-type ATPase complex"/>
    <property type="evidence" value="ECO:0000266"/>
    <property type="project" value="RGD"/>
</dbReference>
<dbReference type="GO" id="GO:0046961">
    <property type="term" value="F:proton-transporting ATPase activity, rotational mechanism"/>
    <property type="evidence" value="ECO:0007669"/>
    <property type="project" value="InterPro"/>
</dbReference>
<dbReference type="GO" id="GO:0007035">
    <property type="term" value="P:vacuolar acidification"/>
    <property type="evidence" value="ECO:0000318"/>
    <property type="project" value="GO_Central"/>
</dbReference>
<dbReference type="GO" id="GO:0007034">
    <property type="term" value="P:vacuolar transport"/>
    <property type="evidence" value="ECO:0000318"/>
    <property type="project" value="GO_Central"/>
</dbReference>
<dbReference type="FunFam" id="1.20.1690.10:FF:000001">
    <property type="entry name" value="V-type proton ATPase subunit"/>
    <property type="match status" value="1"/>
</dbReference>
<dbReference type="FunFam" id="1.20.1690.10:FF:000003">
    <property type="entry name" value="V-type proton ATPase subunit"/>
    <property type="match status" value="1"/>
</dbReference>
<dbReference type="Gene3D" id="1.10.132.50">
    <property type="entry name" value="ATP synthase (C/AC39) subunit, domain 3"/>
    <property type="match status" value="1"/>
</dbReference>
<dbReference type="Gene3D" id="1.20.1690.10">
    <property type="entry name" value="V-type ATP synthase subunit C domain"/>
    <property type="match status" value="2"/>
</dbReference>
<dbReference type="InterPro" id="IPR036079">
    <property type="entry name" value="ATPase_csu/dsu_sf"/>
</dbReference>
<dbReference type="InterPro" id="IPR002843">
    <property type="entry name" value="ATPase_V0-cplx_csu/dsu"/>
</dbReference>
<dbReference type="InterPro" id="IPR016727">
    <property type="entry name" value="ATPase_V0-cplx_dsu"/>
</dbReference>
<dbReference type="InterPro" id="IPR035067">
    <property type="entry name" value="V-type_ATPase_csu/dsu"/>
</dbReference>
<dbReference type="InterPro" id="IPR044911">
    <property type="entry name" value="V-type_ATPase_csu/dsu_dom_3"/>
</dbReference>
<dbReference type="PANTHER" id="PTHR11028">
    <property type="entry name" value="VACUOLAR ATP SYNTHASE SUBUNIT AC39"/>
    <property type="match status" value="1"/>
</dbReference>
<dbReference type="Pfam" id="PF01992">
    <property type="entry name" value="vATP-synt_AC39"/>
    <property type="match status" value="1"/>
</dbReference>
<dbReference type="PIRSF" id="PIRSF018497">
    <property type="entry name" value="V-ATP_synth_D"/>
    <property type="match status" value="1"/>
</dbReference>
<dbReference type="SUPFAM" id="SSF103486">
    <property type="entry name" value="V-type ATP synthase subunit C"/>
    <property type="match status" value="1"/>
</dbReference>
<protein>
    <recommendedName>
        <fullName>V-type proton ATPase subunit d 2</fullName>
        <shortName>V-ATPase subunit d 2</shortName>
    </recommendedName>
    <alternativeName>
        <fullName>Vacuolar proton pump subunit d 2</fullName>
    </alternativeName>
</protein>
<feature type="chain" id="PRO_0000285660" description="V-type proton ATPase subunit d 2">
    <location>
        <begin position="1"/>
        <end position="350"/>
    </location>
</feature>
<keyword id="KW-0375">Hydrogen ion transport</keyword>
<keyword id="KW-0406">Ion transport</keyword>
<keyword id="KW-1185">Reference proteome</keyword>
<keyword id="KW-0813">Transport</keyword>
<accession>Q5FVL0</accession>
<proteinExistence type="evidence at transcript level"/>
<gene>
    <name type="primary">Atp6v0d2</name>
</gene>
<reference key="1">
    <citation type="journal article" date="2004" name="Genome Res.">
        <title>The status, quality, and expansion of the NIH full-length cDNA project: the Mammalian Gene Collection (MGC).</title>
        <authorList>
            <consortium name="The MGC Project Team"/>
        </authorList>
    </citation>
    <scope>NUCLEOTIDE SEQUENCE [LARGE SCALE MRNA]</scope>
    <source>
        <tissue>Ovary</tissue>
    </source>
</reference>
<reference key="2">
    <citation type="journal article" date="2006" name="Biol. Reprod.">
        <title>Distinct expression patterns of different subunit isoforms of the V-ATPase in the rat epididymis.</title>
        <authorList>
            <person name="Pietrement C."/>
            <person name="Sun-Wada G.H."/>
            <person name="Silva N.D."/>
            <person name="McKee M."/>
            <person name="Marshansky V."/>
            <person name="Brown D."/>
            <person name="Futai M."/>
            <person name="Breton S."/>
        </authorList>
    </citation>
    <scope>TISSUE SPECIFICITY</scope>
</reference>
<organism>
    <name type="scientific">Rattus norvegicus</name>
    <name type="common">Rat</name>
    <dbReference type="NCBI Taxonomy" id="10116"/>
    <lineage>
        <taxon>Eukaryota</taxon>
        <taxon>Metazoa</taxon>
        <taxon>Chordata</taxon>
        <taxon>Craniata</taxon>
        <taxon>Vertebrata</taxon>
        <taxon>Euteleostomi</taxon>
        <taxon>Mammalia</taxon>
        <taxon>Eutheria</taxon>
        <taxon>Euarchontoglires</taxon>
        <taxon>Glires</taxon>
        <taxon>Rodentia</taxon>
        <taxon>Myomorpha</taxon>
        <taxon>Muroidea</taxon>
        <taxon>Muridae</taxon>
        <taxon>Murinae</taxon>
        <taxon>Rattus</taxon>
    </lineage>
</organism>
<name>VA0D2_RAT</name>
<comment type="function">
    <text evidence="1 2">Subunit of the V0 complex of vacuolar(H+)-ATPase (V-ATPase), a multisubunit enzyme composed of a peripheral complex (V1) that hydrolyzes ATP and a membrane integral complex (V0) that translocates protons (By similarity). V-ATPase is responsible for acidifying and maintaining the pH of intracellular compartments and in some cell types, is targeted to the plasma membrane, where it is responsible for acidifying the extracellular environment (By similarity). May play a role in coupling of proton transport and ATP hydrolysis (By similarity). Regulator of osteoclast fusion and bone formation (By similarity).</text>
</comment>
<comment type="subunit">
    <text evidence="1 2">V-ATPase is a heteromultimeric enzyme made up of two complexes: the ATP-hydrolytic V1 complex and the proton translocation V0 complex (By similarity). The V1 complex consists of three catalytic AB heterodimers that form a heterohexamer, three peripheral stalks each consisting of EG heterodimers, one central rotor including subunits D and F, and the regulatory subunits C and H (By similarity). The proton translocation complex V0 consists of the proton transport subunit a, a ring of proteolipid subunits c9c'', rotary subunit d, subunits e and f, and the accessory subunits ATP6AP1/Ac45 and ATP6AP2/PRR (By similarity). Interacts with TM4SF19; this interaction inhibits V1-V0 complex assembly (By similarity).</text>
</comment>
<comment type="tissue specificity">
    <text evidence="3">Epididymis and vas deferens.</text>
</comment>
<comment type="similarity">
    <text evidence="4">Belongs to the V-ATPase V0D/AC39 subunit family.</text>
</comment>
<evidence type="ECO:0000250" key="1">
    <source>
        <dbReference type="UniProtKB" id="P61420"/>
    </source>
</evidence>
<evidence type="ECO:0000250" key="2">
    <source>
        <dbReference type="UniProtKB" id="Q80SY3"/>
    </source>
</evidence>
<evidence type="ECO:0000269" key="3">
    <source>
    </source>
</evidence>
<evidence type="ECO:0000305" key="4"/>
<sequence>MLETAELYFNVDHGYLEGLVRGCKASLLTQQDYVNLVQCETLEDLKIHLQTTDYGNFLAHETNPLTVSKIDTEMRKKLCREFDYFRNHSLEPLSTFFTYMTCSYMIDNIILLMNGALQKKSVKEVLAKCHPLGRFTEMEAVNIAESASELFKAVLVETPLAPFFQDCMSENTLDELNIELLRNKLYKSYLEAFYKFCKDHGDVTAEVMCPILEFEADRRALIITLNSFGTELSKEDRETLFPTCGKLYPEGLRLLAQAEDFEHMKRVADNYGVYKPLFDAVGGSGGKTLEDVFYEREVQMNVLAFNRQFHYGVFYAYVKLKEQEMRNIVWIAECISQRHRTKINSYIPIL</sequence>